<reference key="1">
    <citation type="journal article" date="2006" name="BMC Plant Biol.">
        <title>Rapid and accurate pyrosequencing of angiosperm plastid genomes.</title>
        <authorList>
            <person name="Moore M.J."/>
            <person name="Dhingra A."/>
            <person name="Soltis P.S."/>
            <person name="Shaw R."/>
            <person name="Farmerie W.G."/>
            <person name="Folta K.M."/>
            <person name="Soltis D.E."/>
        </authorList>
    </citation>
    <scope>NUCLEOTIDE SEQUENCE [LARGE SCALE GENOMIC DNA]</scope>
</reference>
<name>ACCD_NANDO</name>
<evidence type="ECO:0000250" key="1"/>
<evidence type="ECO:0000255" key="2">
    <source>
        <dbReference type="HAMAP-Rule" id="MF_01395"/>
    </source>
</evidence>
<evidence type="ECO:0000255" key="3">
    <source>
        <dbReference type="PROSITE-ProRule" id="PRU01136"/>
    </source>
</evidence>
<keyword id="KW-0067">ATP-binding</keyword>
<keyword id="KW-0150">Chloroplast</keyword>
<keyword id="KW-0275">Fatty acid biosynthesis</keyword>
<keyword id="KW-0276">Fatty acid metabolism</keyword>
<keyword id="KW-0444">Lipid biosynthesis</keyword>
<keyword id="KW-0443">Lipid metabolism</keyword>
<keyword id="KW-0479">Metal-binding</keyword>
<keyword id="KW-0547">Nucleotide-binding</keyword>
<keyword id="KW-0934">Plastid</keyword>
<keyword id="KW-0808">Transferase</keyword>
<keyword id="KW-0862">Zinc</keyword>
<keyword id="KW-0863">Zinc-finger</keyword>
<gene>
    <name evidence="2" type="primary">accD</name>
</gene>
<geneLocation type="chloroplast"/>
<comment type="function">
    <text evidence="2">Component of the acetyl coenzyme A carboxylase (ACC) complex. Biotin carboxylase (BC) catalyzes the carboxylation of biotin on its carrier protein (BCCP) and then the CO(2) group is transferred by the transcarboxylase to acetyl-CoA to form malonyl-CoA.</text>
</comment>
<comment type="catalytic activity">
    <reaction evidence="2">
        <text>N(6)-carboxybiotinyl-L-lysyl-[protein] + acetyl-CoA = N(6)-biotinyl-L-lysyl-[protein] + malonyl-CoA</text>
        <dbReference type="Rhea" id="RHEA:54728"/>
        <dbReference type="Rhea" id="RHEA-COMP:10505"/>
        <dbReference type="Rhea" id="RHEA-COMP:10506"/>
        <dbReference type="ChEBI" id="CHEBI:57288"/>
        <dbReference type="ChEBI" id="CHEBI:57384"/>
        <dbReference type="ChEBI" id="CHEBI:83144"/>
        <dbReference type="ChEBI" id="CHEBI:83145"/>
        <dbReference type="EC" id="2.1.3.15"/>
    </reaction>
</comment>
<comment type="cofactor">
    <cofactor evidence="2">
        <name>Zn(2+)</name>
        <dbReference type="ChEBI" id="CHEBI:29105"/>
    </cofactor>
    <text evidence="2">Binds 1 zinc ion per subunit.</text>
</comment>
<comment type="pathway">
    <text evidence="2">Lipid metabolism; malonyl-CoA biosynthesis; malonyl-CoA from acetyl-CoA: step 1/1.</text>
</comment>
<comment type="subunit">
    <text evidence="1">Acetyl-CoA carboxylase is a heterohexamer composed of biotin carboxyl carrier protein, biotin carboxylase and 2 subunits each of ACCase subunit alpha and ACCase plastid-coded subunit beta (accD).</text>
</comment>
<comment type="subcellular location">
    <subcellularLocation>
        <location evidence="2">Plastid</location>
        <location evidence="2">Chloroplast stroma</location>
    </subcellularLocation>
</comment>
<comment type="similarity">
    <text evidence="2">Belongs to the AccD/PCCB family.</text>
</comment>
<organism>
    <name type="scientific">Nandina domestica</name>
    <name type="common">Heavenly bamboo</name>
    <dbReference type="NCBI Taxonomy" id="41776"/>
    <lineage>
        <taxon>Eukaryota</taxon>
        <taxon>Viridiplantae</taxon>
        <taxon>Streptophyta</taxon>
        <taxon>Embryophyta</taxon>
        <taxon>Tracheophyta</taxon>
        <taxon>Spermatophyta</taxon>
        <taxon>Magnoliopsida</taxon>
        <taxon>Ranunculales</taxon>
        <taxon>Berberidaceae</taxon>
        <taxon>Nandinoideae</taxon>
        <taxon>Nandineae</taxon>
        <taxon>Nandina</taxon>
    </lineage>
</organism>
<protein>
    <recommendedName>
        <fullName evidence="2">Acetyl-coenzyme A carboxylase carboxyl transferase subunit beta, chloroplastic</fullName>
        <shortName evidence="2">ACCase subunit beta</shortName>
        <shortName evidence="2">Acetyl-CoA carboxylase carboxyltransferase subunit beta</shortName>
        <ecNumber evidence="2">2.1.3.15</ecNumber>
    </recommendedName>
</protein>
<proteinExistence type="inferred from homology"/>
<sequence length="497" mass="56159">MEKEKWWFNSMLFNRELEYRCGLSKSTDGIGPIGNTNGSEDPVIDKNIHCWGDSDSSSCNNVDRLFGVRGIRNFISDDTFLVRDSNGDNYSIYFDIENHIFEIDNDRYELESSFSSYLNSSYLNTGSKSNNHYYDRYMYDTKYSWNNHINSCIDNYLDSEIRINSYFSSGGDNYSKSYIYSYICSESVNSIANASSDIKTSANESDSHESDSHMRGKYNDLDINKKYRHLWVQCENCYGLNYKKFFRSKFNICEQCGYHLKMSSSDRIELSIDPGTWDPMDDDMVSVDPIEFHSEEEPYKDRIDSYQKKTGLTEAVQTGIGQLNGIPIAIGVMDFQFMGGSMGSVVGEKITRLIEYATNRSLPVIIVCASGGARMQEGSLSLMQMAKISSASYNYQSNKKLLYVSILTSPTTGGVTASFGMLGDIIIAEPNAYIAFAGKRVIEQTLNKIVPDGSQAAEYLFHKGLFDPIVPRNLLKGVLSELFQLHGFFPVNSNSIK</sequence>
<accession>Q09FV2</accession>
<dbReference type="EC" id="2.1.3.15" evidence="2"/>
<dbReference type="EMBL" id="DQ923117">
    <property type="protein sequence ID" value="ABI49872.1"/>
    <property type="molecule type" value="Genomic_DNA"/>
</dbReference>
<dbReference type="RefSeq" id="YP_740659.1">
    <property type="nucleotide sequence ID" value="NC_008336.1"/>
</dbReference>
<dbReference type="SMR" id="Q09FV2"/>
<dbReference type="GeneID" id="4271605"/>
<dbReference type="UniPathway" id="UPA00655">
    <property type="reaction ID" value="UER00711"/>
</dbReference>
<dbReference type="GO" id="GO:0009317">
    <property type="term" value="C:acetyl-CoA carboxylase complex"/>
    <property type="evidence" value="ECO:0007669"/>
    <property type="project" value="InterPro"/>
</dbReference>
<dbReference type="GO" id="GO:0009570">
    <property type="term" value="C:chloroplast stroma"/>
    <property type="evidence" value="ECO:0007669"/>
    <property type="project" value="UniProtKB-SubCell"/>
</dbReference>
<dbReference type="GO" id="GO:0003989">
    <property type="term" value="F:acetyl-CoA carboxylase activity"/>
    <property type="evidence" value="ECO:0007669"/>
    <property type="project" value="InterPro"/>
</dbReference>
<dbReference type="GO" id="GO:0005524">
    <property type="term" value="F:ATP binding"/>
    <property type="evidence" value="ECO:0007669"/>
    <property type="project" value="UniProtKB-KW"/>
</dbReference>
<dbReference type="GO" id="GO:0016743">
    <property type="term" value="F:carboxyl- or carbamoyltransferase activity"/>
    <property type="evidence" value="ECO:0007669"/>
    <property type="project" value="UniProtKB-UniRule"/>
</dbReference>
<dbReference type="GO" id="GO:0008270">
    <property type="term" value="F:zinc ion binding"/>
    <property type="evidence" value="ECO:0007669"/>
    <property type="project" value="UniProtKB-UniRule"/>
</dbReference>
<dbReference type="GO" id="GO:0006633">
    <property type="term" value="P:fatty acid biosynthetic process"/>
    <property type="evidence" value="ECO:0007669"/>
    <property type="project" value="UniProtKB-KW"/>
</dbReference>
<dbReference type="GO" id="GO:2001295">
    <property type="term" value="P:malonyl-CoA biosynthetic process"/>
    <property type="evidence" value="ECO:0007669"/>
    <property type="project" value="UniProtKB-UniRule"/>
</dbReference>
<dbReference type="Gene3D" id="3.90.226.10">
    <property type="entry name" value="2-enoyl-CoA Hydratase, Chain A, domain 1"/>
    <property type="match status" value="1"/>
</dbReference>
<dbReference type="HAMAP" id="MF_01395">
    <property type="entry name" value="AcetylCoA_CT_beta"/>
    <property type="match status" value="1"/>
</dbReference>
<dbReference type="InterPro" id="IPR034733">
    <property type="entry name" value="AcCoA_carboxyl_beta"/>
</dbReference>
<dbReference type="InterPro" id="IPR000438">
    <property type="entry name" value="Acetyl_CoA_COase_Trfase_b_su"/>
</dbReference>
<dbReference type="InterPro" id="IPR029045">
    <property type="entry name" value="ClpP/crotonase-like_dom_sf"/>
</dbReference>
<dbReference type="InterPro" id="IPR011762">
    <property type="entry name" value="COA_CT_N"/>
</dbReference>
<dbReference type="NCBIfam" id="TIGR00515">
    <property type="entry name" value="accD"/>
    <property type="match status" value="1"/>
</dbReference>
<dbReference type="PANTHER" id="PTHR42995">
    <property type="entry name" value="ACETYL-COENZYME A CARBOXYLASE CARBOXYL TRANSFERASE SUBUNIT BETA, CHLOROPLASTIC"/>
    <property type="match status" value="1"/>
</dbReference>
<dbReference type="PANTHER" id="PTHR42995:SF5">
    <property type="entry name" value="ACETYL-COENZYME A CARBOXYLASE CARBOXYL TRANSFERASE SUBUNIT BETA, CHLOROPLASTIC"/>
    <property type="match status" value="1"/>
</dbReference>
<dbReference type="Pfam" id="PF01039">
    <property type="entry name" value="Carboxyl_trans"/>
    <property type="match status" value="1"/>
</dbReference>
<dbReference type="PRINTS" id="PR01070">
    <property type="entry name" value="ACCCTRFRASEB"/>
</dbReference>
<dbReference type="SUPFAM" id="SSF52096">
    <property type="entry name" value="ClpP/crotonase"/>
    <property type="match status" value="1"/>
</dbReference>
<dbReference type="PROSITE" id="PS50980">
    <property type="entry name" value="COA_CT_NTER"/>
    <property type="match status" value="1"/>
</dbReference>
<feature type="chain" id="PRO_0000359152" description="Acetyl-coenzyme A carboxylase carboxyl transferase subunit beta, chloroplastic">
    <location>
        <begin position="1"/>
        <end position="497"/>
    </location>
</feature>
<feature type="domain" description="CoA carboxyltransferase N-terminal" evidence="3">
    <location>
        <begin position="230"/>
        <end position="497"/>
    </location>
</feature>
<feature type="zinc finger region" description="C4-type" evidence="2">
    <location>
        <begin position="234"/>
        <end position="256"/>
    </location>
</feature>
<feature type="binding site" evidence="2">
    <location>
        <position position="234"/>
    </location>
    <ligand>
        <name>Zn(2+)</name>
        <dbReference type="ChEBI" id="CHEBI:29105"/>
    </ligand>
</feature>
<feature type="binding site" evidence="2">
    <location>
        <position position="237"/>
    </location>
    <ligand>
        <name>Zn(2+)</name>
        <dbReference type="ChEBI" id="CHEBI:29105"/>
    </ligand>
</feature>
<feature type="binding site" evidence="2">
    <location>
        <position position="253"/>
    </location>
    <ligand>
        <name>Zn(2+)</name>
        <dbReference type="ChEBI" id="CHEBI:29105"/>
    </ligand>
</feature>
<feature type="binding site" evidence="2">
    <location>
        <position position="256"/>
    </location>
    <ligand>
        <name>Zn(2+)</name>
        <dbReference type="ChEBI" id="CHEBI:29105"/>
    </ligand>
</feature>